<gene>
    <name evidence="1" type="primary">panD</name>
    <name type="ordered locus">HNE_1379</name>
</gene>
<reference key="1">
    <citation type="journal article" date="2006" name="J. Bacteriol.">
        <title>Comparative genomic evidence for a close relationship between the dimorphic prosthecate bacteria Hyphomonas neptunium and Caulobacter crescentus.</title>
        <authorList>
            <person name="Badger J.H."/>
            <person name="Hoover T.R."/>
            <person name="Brun Y.V."/>
            <person name="Weiner R.M."/>
            <person name="Laub M.T."/>
            <person name="Alexandre G."/>
            <person name="Mrazek J."/>
            <person name="Ren Q."/>
            <person name="Paulsen I.T."/>
            <person name="Nelson K.E."/>
            <person name="Khouri H.M."/>
            <person name="Radune D."/>
            <person name="Sosa J."/>
            <person name="Dodson R.J."/>
            <person name="Sullivan S.A."/>
            <person name="Rosovitz M.J."/>
            <person name="Madupu R."/>
            <person name="Brinkac L.M."/>
            <person name="Durkin A.S."/>
            <person name="Daugherty S.C."/>
            <person name="Kothari S.P."/>
            <person name="Giglio M.G."/>
            <person name="Zhou L."/>
            <person name="Haft D.H."/>
            <person name="Selengut J.D."/>
            <person name="Davidsen T.M."/>
            <person name="Yang Q."/>
            <person name="Zafar N."/>
            <person name="Ward N.L."/>
        </authorList>
    </citation>
    <scope>NUCLEOTIDE SEQUENCE [LARGE SCALE GENOMIC DNA]</scope>
    <source>
        <strain>ATCC 15444</strain>
    </source>
</reference>
<comment type="function">
    <text evidence="1">Catalyzes the pyruvoyl-dependent decarboxylation of aspartate to produce beta-alanine.</text>
</comment>
<comment type="catalytic activity">
    <reaction evidence="1">
        <text>L-aspartate + H(+) = beta-alanine + CO2</text>
        <dbReference type="Rhea" id="RHEA:19497"/>
        <dbReference type="ChEBI" id="CHEBI:15378"/>
        <dbReference type="ChEBI" id="CHEBI:16526"/>
        <dbReference type="ChEBI" id="CHEBI:29991"/>
        <dbReference type="ChEBI" id="CHEBI:57966"/>
        <dbReference type="EC" id="4.1.1.11"/>
    </reaction>
</comment>
<comment type="cofactor">
    <cofactor evidence="1">
        <name>pyruvate</name>
        <dbReference type="ChEBI" id="CHEBI:15361"/>
    </cofactor>
    <text evidence="1">Binds 1 pyruvoyl group covalently per subunit.</text>
</comment>
<comment type="pathway">
    <text evidence="1">Cofactor biosynthesis; (R)-pantothenate biosynthesis; beta-alanine from L-aspartate: step 1/1.</text>
</comment>
<comment type="subunit">
    <text evidence="1">Heterooctamer of four alpha and four beta subunits.</text>
</comment>
<comment type="subcellular location">
    <subcellularLocation>
        <location evidence="1">Cytoplasm</location>
    </subcellularLocation>
</comment>
<comment type="PTM">
    <text evidence="1">Is synthesized initially as an inactive proenzyme, which is activated by self-cleavage at a specific serine bond to produce a beta-subunit with a hydroxyl group at its C-terminus and an alpha-subunit with a pyruvoyl group at its N-terminus.</text>
</comment>
<comment type="similarity">
    <text evidence="1">Belongs to the PanD family.</text>
</comment>
<proteinExistence type="inferred from homology"/>
<keyword id="KW-0068">Autocatalytic cleavage</keyword>
<keyword id="KW-0963">Cytoplasm</keyword>
<keyword id="KW-0210">Decarboxylase</keyword>
<keyword id="KW-0456">Lyase</keyword>
<keyword id="KW-0566">Pantothenate biosynthesis</keyword>
<keyword id="KW-0670">Pyruvate</keyword>
<keyword id="KW-1185">Reference proteome</keyword>
<keyword id="KW-0704">Schiff base</keyword>
<keyword id="KW-0865">Zymogen</keyword>
<accession>Q0C2E7</accession>
<dbReference type="EC" id="4.1.1.11" evidence="1"/>
<dbReference type="EMBL" id="CP000158">
    <property type="protein sequence ID" value="ABI77317.1"/>
    <property type="molecule type" value="Genomic_DNA"/>
</dbReference>
<dbReference type="RefSeq" id="WP_011646396.1">
    <property type="nucleotide sequence ID" value="NC_008358.1"/>
</dbReference>
<dbReference type="SMR" id="Q0C2E7"/>
<dbReference type="STRING" id="228405.HNE_1379"/>
<dbReference type="KEGG" id="hne:HNE_1379"/>
<dbReference type="eggNOG" id="COG0853">
    <property type="taxonomic scope" value="Bacteria"/>
</dbReference>
<dbReference type="HOGENOM" id="CLU_115305_2_1_5"/>
<dbReference type="UniPathway" id="UPA00028">
    <property type="reaction ID" value="UER00002"/>
</dbReference>
<dbReference type="Proteomes" id="UP000001959">
    <property type="component" value="Chromosome"/>
</dbReference>
<dbReference type="GO" id="GO:0005829">
    <property type="term" value="C:cytosol"/>
    <property type="evidence" value="ECO:0007669"/>
    <property type="project" value="TreeGrafter"/>
</dbReference>
<dbReference type="GO" id="GO:0004068">
    <property type="term" value="F:aspartate 1-decarboxylase activity"/>
    <property type="evidence" value="ECO:0007669"/>
    <property type="project" value="UniProtKB-UniRule"/>
</dbReference>
<dbReference type="GO" id="GO:0006523">
    <property type="term" value="P:alanine biosynthetic process"/>
    <property type="evidence" value="ECO:0007669"/>
    <property type="project" value="InterPro"/>
</dbReference>
<dbReference type="GO" id="GO:0015940">
    <property type="term" value="P:pantothenate biosynthetic process"/>
    <property type="evidence" value="ECO:0007669"/>
    <property type="project" value="UniProtKB-UniRule"/>
</dbReference>
<dbReference type="CDD" id="cd06919">
    <property type="entry name" value="Asp_decarbox"/>
    <property type="match status" value="1"/>
</dbReference>
<dbReference type="Gene3D" id="2.40.40.20">
    <property type="match status" value="1"/>
</dbReference>
<dbReference type="HAMAP" id="MF_00446">
    <property type="entry name" value="PanD"/>
    <property type="match status" value="1"/>
</dbReference>
<dbReference type="InterPro" id="IPR009010">
    <property type="entry name" value="Asp_de-COase-like_dom_sf"/>
</dbReference>
<dbReference type="InterPro" id="IPR003190">
    <property type="entry name" value="Asp_decarbox"/>
</dbReference>
<dbReference type="NCBIfam" id="TIGR00223">
    <property type="entry name" value="panD"/>
    <property type="match status" value="1"/>
</dbReference>
<dbReference type="PANTHER" id="PTHR21012">
    <property type="entry name" value="ASPARTATE 1-DECARBOXYLASE"/>
    <property type="match status" value="1"/>
</dbReference>
<dbReference type="PANTHER" id="PTHR21012:SF0">
    <property type="entry name" value="ASPARTATE 1-DECARBOXYLASE"/>
    <property type="match status" value="1"/>
</dbReference>
<dbReference type="Pfam" id="PF02261">
    <property type="entry name" value="Asp_decarbox"/>
    <property type="match status" value="1"/>
</dbReference>
<dbReference type="PIRSF" id="PIRSF006246">
    <property type="entry name" value="Asp_decarbox"/>
    <property type="match status" value="1"/>
</dbReference>
<dbReference type="SUPFAM" id="SSF50692">
    <property type="entry name" value="ADC-like"/>
    <property type="match status" value="1"/>
</dbReference>
<protein>
    <recommendedName>
        <fullName evidence="1">Aspartate 1-decarboxylase</fullName>
        <ecNumber evidence="1">4.1.1.11</ecNumber>
    </recommendedName>
    <alternativeName>
        <fullName evidence="1">Aspartate alpha-decarboxylase</fullName>
    </alternativeName>
    <component>
        <recommendedName>
            <fullName evidence="1">Aspartate 1-decarboxylase beta chain</fullName>
        </recommendedName>
    </component>
    <component>
        <recommendedName>
            <fullName evidence="1">Aspartate 1-decarboxylase alpha chain</fullName>
        </recommendedName>
    </component>
</protein>
<organism>
    <name type="scientific">Hyphomonas neptunium (strain ATCC 15444)</name>
    <dbReference type="NCBI Taxonomy" id="228405"/>
    <lineage>
        <taxon>Bacteria</taxon>
        <taxon>Pseudomonadati</taxon>
        <taxon>Pseudomonadota</taxon>
        <taxon>Alphaproteobacteria</taxon>
        <taxon>Hyphomonadales</taxon>
        <taxon>Hyphomonadaceae</taxon>
        <taxon>Hyphomonas</taxon>
    </lineage>
</organism>
<feature type="chain" id="PRO_0000307001" description="Aspartate 1-decarboxylase beta chain" evidence="1">
    <location>
        <begin position="1"/>
        <end position="24"/>
    </location>
</feature>
<feature type="chain" id="PRO_0000307002" description="Aspartate 1-decarboxylase alpha chain" evidence="1">
    <location>
        <begin position="25"/>
        <end position="118"/>
    </location>
</feature>
<feature type="active site" description="Schiff-base intermediate with substrate; via pyruvic acid" evidence="1">
    <location>
        <position position="25"/>
    </location>
</feature>
<feature type="active site" description="Proton donor" evidence="1">
    <location>
        <position position="58"/>
    </location>
</feature>
<feature type="binding site" evidence="1">
    <location>
        <position position="57"/>
    </location>
    <ligand>
        <name>substrate</name>
    </ligand>
</feature>
<feature type="binding site" evidence="1">
    <location>
        <begin position="73"/>
        <end position="75"/>
    </location>
    <ligand>
        <name>substrate</name>
    </ligand>
</feature>
<feature type="modified residue" description="Pyruvic acid (Ser)" evidence="1">
    <location>
        <position position="25"/>
    </location>
</feature>
<name>PAND_HYPNA</name>
<sequence length="118" mass="12548">MILSMLKAKLHGATVTQCDLHYEGSVSIDQDLLDASGILPHEKVDIWNVTNGARIQTYALEAPRGSRTIGVNGAAARHFAVGDTVIIAAFCGVEAEKARQHAPTVVLLGEGNEIKRAS</sequence>
<evidence type="ECO:0000255" key="1">
    <source>
        <dbReference type="HAMAP-Rule" id="MF_00446"/>
    </source>
</evidence>